<reference key="1">
    <citation type="journal article" date="1997" name="J. Bacteriol.">
        <title>Complete genome sequence of Methanobacterium thermoautotrophicum deltaH: functional analysis and comparative genomics.</title>
        <authorList>
            <person name="Smith D.R."/>
            <person name="Doucette-Stamm L.A."/>
            <person name="Deloughery C."/>
            <person name="Lee H.-M."/>
            <person name="Dubois J."/>
            <person name="Aldredge T."/>
            <person name="Bashirzadeh R."/>
            <person name="Blakely D."/>
            <person name="Cook R."/>
            <person name="Gilbert K."/>
            <person name="Harrison D."/>
            <person name="Hoang L."/>
            <person name="Keagle P."/>
            <person name="Lumm W."/>
            <person name="Pothier B."/>
            <person name="Qiu D."/>
            <person name="Spadafora R."/>
            <person name="Vicare R."/>
            <person name="Wang Y."/>
            <person name="Wierzbowski J."/>
            <person name="Gibson R."/>
            <person name="Jiwani N."/>
            <person name="Caruso A."/>
            <person name="Bush D."/>
            <person name="Safer H."/>
            <person name="Patwell D."/>
            <person name="Prabhakar S."/>
            <person name="McDougall S."/>
            <person name="Shimer G."/>
            <person name="Goyal A."/>
            <person name="Pietrovski S."/>
            <person name="Church G.M."/>
            <person name="Daniels C.J."/>
            <person name="Mao J.-I."/>
            <person name="Rice P."/>
            <person name="Noelling J."/>
            <person name="Reeve J.N."/>
        </authorList>
    </citation>
    <scope>NUCLEOTIDE SEQUENCE [LARGE SCALE GENOMIC DNA]</scope>
    <source>
        <strain>ATCC 29096 / DSM 1053 / JCM 10044 / NBRC 100330 / Delta H</strain>
    </source>
</reference>
<keyword id="KW-0067">ATP-binding</keyword>
<keyword id="KW-0413">Isomerase</keyword>
<keyword id="KW-0456">Lyase</keyword>
<keyword id="KW-0479">Metal-binding</keyword>
<keyword id="KW-0511">Multifunctional enzyme</keyword>
<keyword id="KW-0520">NAD</keyword>
<keyword id="KW-0521">NADP</keyword>
<keyword id="KW-0547">Nucleotide-binding</keyword>
<keyword id="KW-0630">Potassium</keyword>
<keyword id="KW-1185">Reference proteome</keyword>
<comment type="function">
    <text evidence="1">Bifunctional enzyme that catalyzes the epimerization of the S- and R-forms of NAD(P)HX and the dehydration of the S-form of NAD(P)HX at the expense of ADP, which is converted to AMP. This allows the repair of both epimers of NAD(P)HX, a damaged form of NAD(P)H that is a result of enzymatic or heat-dependent hydration (By similarity).</text>
</comment>
<comment type="catalytic activity">
    <reaction>
        <text>(6S)-NADHX + ADP = AMP + phosphate + NADH + H(+)</text>
        <dbReference type="Rhea" id="RHEA:32223"/>
        <dbReference type="ChEBI" id="CHEBI:15378"/>
        <dbReference type="ChEBI" id="CHEBI:43474"/>
        <dbReference type="ChEBI" id="CHEBI:57945"/>
        <dbReference type="ChEBI" id="CHEBI:64074"/>
        <dbReference type="ChEBI" id="CHEBI:456215"/>
        <dbReference type="ChEBI" id="CHEBI:456216"/>
        <dbReference type="EC" id="4.2.1.136"/>
    </reaction>
</comment>
<comment type="catalytic activity">
    <reaction>
        <text>(6S)-NADPHX + ADP = AMP + phosphate + NADPH + H(+)</text>
        <dbReference type="Rhea" id="RHEA:32235"/>
        <dbReference type="ChEBI" id="CHEBI:15378"/>
        <dbReference type="ChEBI" id="CHEBI:43474"/>
        <dbReference type="ChEBI" id="CHEBI:57783"/>
        <dbReference type="ChEBI" id="CHEBI:64076"/>
        <dbReference type="ChEBI" id="CHEBI:456215"/>
        <dbReference type="ChEBI" id="CHEBI:456216"/>
        <dbReference type="EC" id="4.2.1.136"/>
    </reaction>
</comment>
<comment type="catalytic activity">
    <reaction>
        <text>(6R)-NADHX = (6S)-NADHX</text>
        <dbReference type="Rhea" id="RHEA:32215"/>
        <dbReference type="ChEBI" id="CHEBI:64074"/>
        <dbReference type="ChEBI" id="CHEBI:64075"/>
        <dbReference type="EC" id="5.1.99.6"/>
    </reaction>
</comment>
<comment type="catalytic activity">
    <reaction>
        <text>(6R)-NADPHX = (6S)-NADPHX</text>
        <dbReference type="Rhea" id="RHEA:32227"/>
        <dbReference type="ChEBI" id="CHEBI:64076"/>
        <dbReference type="ChEBI" id="CHEBI:64077"/>
        <dbReference type="EC" id="5.1.99.6"/>
    </reaction>
</comment>
<comment type="cofactor">
    <cofactor evidence="1">
        <name>K(+)</name>
        <dbReference type="ChEBI" id="CHEBI:29103"/>
    </cofactor>
    <text evidence="1">Binds 1 potassium ion per subunit.</text>
</comment>
<comment type="similarity">
    <text evidence="2">In the N-terminal section; belongs to the NnrE/AIBP family.</text>
</comment>
<comment type="similarity">
    <text evidence="2">In the C-terminal section; belongs to the NnrD/CARKD family.</text>
</comment>
<gene>
    <name type="primary">nnr</name>
    <name type="ordered locus">MTH_1256</name>
</gene>
<evidence type="ECO:0000250" key="1"/>
<evidence type="ECO:0000305" key="2"/>
<organism>
    <name type="scientific">Methanothermobacter thermautotrophicus (strain ATCC 29096 / DSM 1053 / JCM 10044 / NBRC 100330 / Delta H)</name>
    <name type="common">Methanobacterium thermoautotrophicum</name>
    <dbReference type="NCBI Taxonomy" id="187420"/>
    <lineage>
        <taxon>Archaea</taxon>
        <taxon>Methanobacteriati</taxon>
        <taxon>Methanobacteriota</taxon>
        <taxon>Methanomada group</taxon>
        <taxon>Methanobacteria</taxon>
        <taxon>Methanobacteriales</taxon>
        <taxon>Methanobacteriaceae</taxon>
        <taxon>Methanothermobacter</taxon>
    </lineage>
</organism>
<name>NNR_METTH</name>
<accession>O27324</accession>
<protein>
    <recommendedName>
        <fullName>Bifunctional NAD(P)H-hydrate repair enzyme Nnr</fullName>
    </recommendedName>
    <alternativeName>
        <fullName>Nicotinamide nucleotide repair protein</fullName>
    </alternativeName>
    <domain>
        <recommendedName>
            <fullName>ADP-dependent (S)-NAD(P)H-hydrate dehydratase</fullName>
            <ecNumber>4.2.1.136</ecNumber>
        </recommendedName>
        <alternativeName>
            <fullName>ADP-dependent NAD(P)HX dehydratase</fullName>
        </alternativeName>
    </domain>
    <domain>
        <recommendedName>
            <fullName>NAD(P)H-hydrate epimerase</fullName>
            <ecNumber>5.1.99.6</ecNumber>
        </recommendedName>
        <alternativeName>
            <fullName>NAD(P)HX epimerase</fullName>
        </alternativeName>
    </domain>
</protein>
<dbReference type="EC" id="4.2.1.136"/>
<dbReference type="EC" id="5.1.99.6"/>
<dbReference type="EMBL" id="AE000666">
    <property type="protein sequence ID" value="AAB85745.1"/>
    <property type="molecule type" value="Genomic_DNA"/>
</dbReference>
<dbReference type="PIR" id="H69034">
    <property type="entry name" value="H69034"/>
</dbReference>
<dbReference type="SMR" id="O27324"/>
<dbReference type="FunCoup" id="O27324">
    <property type="interactions" value="3"/>
</dbReference>
<dbReference type="STRING" id="187420.MTH_1256"/>
<dbReference type="PaxDb" id="187420-MTH_1256"/>
<dbReference type="EnsemblBacteria" id="AAB85745">
    <property type="protein sequence ID" value="AAB85745"/>
    <property type="gene ID" value="MTH_1256"/>
</dbReference>
<dbReference type="KEGG" id="mth:MTH_1256"/>
<dbReference type="PATRIC" id="fig|187420.15.peg.1235"/>
<dbReference type="HOGENOM" id="CLU_024853_4_1_2"/>
<dbReference type="InParanoid" id="O27324"/>
<dbReference type="Proteomes" id="UP000005223">
    <property type="component" value="Chromosome"/>
</dbReference>
<dbReference type="GO" id="GO:0052855">
    <property type="term" value="F:ADP-dependent NAD(P)H-hydrate dehydratase activity"/>
    <property type="evidence" value="ECO:0007669"/>
    <property type="project" value="UniProtKB-UniRule"/>
</dbReference>
<dbReference type="GO" id="GO:0005524">
    <property type="term" value="F:ATP binding"/>
    <property type="evidence" value="ECO:0007669"/>
    <property type="project" value="UniProtKB-KW"/>
</dbReference>
<dbReference type="GO" id="GO:0046872">
    <property type="term" value="F:metal ion binding"/>
    <property type="evidence" value="ECO:0007669"/>
    <property type="project" value="UniProtKB-KW"/>
</dbReference>
<dbReference type="GO" id="GO:0052856">
    <property type="term" value="F:NAD(P)HX epimerase activity"/>
    <property type="evidence" value="ECO:0007669"/>
    <property type="project" value="UniProtKB-UniRule"/>
</dbReference>
<dbReference type="GO" id="GO:0110051">
    <property type="term" value="P:metabolite repair"/>
    <property type="evidence" value="ECO:0007669"/>
    <property type="project" value="TreeGrafter"/>
</dbReference>
<dbReference type="GO" id="GO:0046496">
    <property type="term" value="P:nicotinamide nucleotide metabolic process"/>
    <property type="evidence" value="ECO:0007669"/>
    <property type="project" value="UniProtKB-UniRule"/>
</dbReference>
<dbReference type="CDD" id="cd01171">
    <property type="entry name" value="YXKO-related"/>
    <property type="match status" value="1"/>
</dbReference>
<dbReference type="Gene3D" id="3.40.1190.20">
    <property type="match status" value="1"/>
</dbReference>
<dbReference type="Gene3D" id="3.40.50.10260">
    <property type="entry name" value="YjeF N-terminal domain"/>
    <property type="match status" value="1"/>
</dbReference>
<dbReference type="HAMAP" id="MF_01965">
    <property type="entry name" value="NADHX_dehydratase"/>
    <property type="match status" value="1"/>
</dbReference>
<dbReference type="HAMAP" id="MF_01966">
    <property type="entry name" value="NADHX_epimerase"/>
    <property type="match status" value="1"/>
</dbReference>
<dbReference type="InterPro" id="IPR000631">
    <property type="entry name" value="CARKD"/>
</dbReference>
<dbReference type="InterPro" id="IPR030677">
    <property type="entry name" value="Nnr"/>
</dbReference>
<dbReference type="InterPro" id="IPR029056">
    <property type="entry name" value="Ribokinase-like"/>
</dbReference>
<dbReference type="InterPro" id="IPR004443">
    <property type="entry name" value="YjeF_N_dom"/>
</dbReference>
<dbReference type="InterPro" id="IPR036652">
    <property type="entry name" value="YjeF_N_dom_sf"/>
</dbReference>
<dbReference type="NCBIfam" id="TIGR00196">
    <property type="entry name" value="yjeF_cterm"/>
    <property type="match status" value="1"/>
</dbReference>
<dbReference type="NCBIfam" id="TIGR00197">
    <property type="entry name" value="yjeF_nterm"/>
    <property type="match status" value="1"/>
</dbReference>
<dbReference type="PANTHER" id="PTHR12592:SF0">
    <property type="entry name" value="ATP-DEPENDENT (S)-NAD(P)H-HYDRATE DEHYDRATASE"/>
    <property type="match status" value="1"/>
</dbReference>
<dbReference type="PANTHER" id="PTHR12592">
    <property type="entry name" value="ATP-DEPENDENT (S)-NAD(P)H-HYDRATE DEHYDRATASE FAMILY MEMBER"/>
    <property type="match status" value="1"/>
</dbReference>
<dbReference type="Pfam" id="PF01256">
    <property type="entry name" value="Carb_kinase"/>
    <property type="match status" value="1"/>
</dbReference>
<dbReference type="Pfam" id="PF03853">
    <property type="entry name" value="YjeF_N"/>
    <property type="match status" value="1"/>
</dbReference>
<dbReference type="PIRSF" id="PIRSF017184">
    <property type="entry name" value="Nnr"/>
    <property type="match status" value="1"/>
</dbReference>
<dbReference type="SUPFAM" id="SSF53613">
    <property type="entry name" value="Ribokinase-like"/>
    <property type="match status" value="1"/>
</dbReference>
<dbReference type="SUPFAM" id="SSF64153">
    <property type="entry name" value="YjeF N-terminal domain-like"/>
    <property type="match status" value="1"/>
</dbReference>
<dbReference type="PROSITE" id="PS51383">
    <property type="entry name" value="YJEF_C_3"/>
    <property type="match status" value="1"/>
</dbReference>
<dbReference type="PROSITE" id="PS51385">
    <property type="entry name" value="YJEF_N"/>
    <property type="match status" value="1"/>
</dbReference>
<feature type="chain" id="PRO_0000416428" description="Bifunctional NAD(P)H-hydrate repair enzyme Nnr">
    <location>
        <begin position="1"/>
        <end position="519"/>
    </location>
</feature>
<feature type="domain" description="YjeF N-terminal">
    <location>
        <begin position="25"/>
        <end position="233"/>
    </location>
</feature>
<feature type="domain" description="YjeF C-terminal">
    <location>
        <begin position="235"/>
        <end position="515"/>
    </location>
</feature>
<feature type="region of interest" description="NAD(P)H-hydrate epimerase" evidence="1">
    <location>
        <begin position="1"/>
        <end position="233"/>
    </location>
</feature>
<feature type="region of interest" description="NADPHX 1; for epimerase activity" evidence="1">
    <location>
        <begin position="71"/>
        <end position="75"/>
    </location>
</feature>
<feature type="region of interest" description="NADPHX 1; for epimerase activity" evidence="1">
    <location>
        <begin position="148"/>
        <end position="154"/>
    </location>
</feature>
<feature type="region of interest" description="ADP-dependent (S)-NAD(P)H-hydrate dehydratase" evidence="1">
    <location>
        <begin position="235"/>
        <end position="519"/>
    </location>
</feature>
<feature type="region of interest" description="NADPHX 2; for dehydratase activity" evidence="1">
    <location>
        <begin position="389"/>
        <end position="395"/>
    </location>
</feature>
<feature type="binding site" evidence="1">
    <location>
        <position position="72"/>
    </location>
    <ligand>
        <name>K(+)</name>
        <dbReference type="ChEBI" id="CHEBI:29103"/>
    </ligand>
</feature>
<feature type="binding site" evidence="1">
    <location>
        <position position="144"/>
    </location>
    <ligand>
        <name>K(+)</name>
        <dbReference type="ChEBI" id="CHEBI:29103"/>
    </ligand>
</feature>
<feature type="binding site" evidence="1">
    <location>
        <position position="177"/>
    </location>
    <ligand>
        <name>(6S)-NADPHX</name>
        <dbReference type="ChEBI" id="CHEBI:64076"/>
        <label>1</label>
        <note>for epimerase activity</note>
    </ligand>
</feature>
<feature type="binding site" evidence="1">
    <location>
        <position position="180"/>
    </location>
    <ligand>
        <name>K(+)</name>
        <dbReference type="ChEBI" id="CHEBI:29103"/>
    </ligand>
</feature>
<feature type="binding site" evidence="1">
    <location>
        <position position="338"/>
    </location>
    <ligand>
        <name>(6S)-NADPHX</name>
        <dbReference type="ChEBI" id="CHEBI:64076"/>
        <label>2</label>
        <note>for dehydratase activity</note>
    </ligand>
</feature>
<feature type="binding site" evidence="1">
    <location>
        <begin position="428"/>
        <end position="432"/>
    </location>
    <ligand>
        <name>ADP</name>
        <dbReference type="ChEBI" id="CHEBI:456216"/>
    </ligand>
</feature>
<feature type="binding site" evidence="1">
    <location>
        <begin position="447"/>
        <end position="456"/>
    </location>
    <ligand>
        <name>ADP</name>
        <dbReference type="ChEBI" id="CHEBI:456216"/>
    </ligand>
</feature>
<feature type="binding site" evidence="1">
    <location>
        <position position="457"/>
    </location>
    <ligand>
        <name>(6S)-NADPHX</name>
        <dbReference type="ChEBI" id="CHEBI:64076"/>
        <label>2</label>
        <note>for dehydratase activity</note>
    </ligand>
</feature>
<sequence>MMRCGEGYPGLILAKEDFIMKPVDMAAADINAEYLGVPRLSLMENAGRAVAEEIGNAVDSGRVAIFCGPGGNGGDGFVAARHLLNMGFEVEVHLLGHPERIGSEEALVNWGVLGAMQPHPGGFSVDFVRDSSEIKPTDADVVVDAILGTGVRGSIREPSRSAIEIINRSEAFRVSVDIPSGLNPETGAVEDIAVSADLTVTFHRMKDGLKLADPAVTGEIVVRDIGIPPAAEIFMGPGDLLRIPSRRPGSHKGENGRVLIIGGSRQYSGAPAIAAKAALRAGADIVMVAAPGSAARAIRSLSPDLIVRELEGGYIGMESLDEILELAEKADSVLMGCGAGRETSTARTFMRAIEDLHEMEKPIVLDADALRLMDYSDVSEYRELTVTPHMAEFSSFFKLKSMIFNDFRESVSAFQSISSRIRGTVLLKGRIDMIFQGDRLRLNKTGCPGMTVGGTGDALAGLTAGLRALGLSSFDSASLAAFINGMAGELAMERHGNGFTASDMVDMIPSVMDPGFYGF</sequence>
<proteinExistence type="inferred from homology"/>